<keyword id="KW-0032">Aminotransferase</keyword>
<keyword id="KW-0963">Cytoplasm</keyword>
<keyword id="KW-0315">Glutamine amidotransferase</keyword>
<keyword id="KW-1185">Reference proteome</keyword>
<keyword id="KW-0677">Repeat</keyword>
<keyword id="KW-0808">Transferase</keyword>
<sequence>MCGIIGYSGSKANAVEVLLEGLEKVEYRGYDSAGIAFVTDSGIQIEKKEGKLENLKNHMKNFEVLSCTGIGHTRWATHGIPTDRNAHPHYSESKDVALIHNGIIENYVEIKKELLEQGVKFSSDTDTEVVAQLFSKLYDGDLYSTLKKVLKRIRGTYAFAIIHKDFPDKMICCRNHSPLIVGLGEHQNFIASDVSAILKYTRDIIYLEDGDVVLVTKDNVTVYDKDEKEVKREVKKVEWNFEQASKGGYAHFMIKEIEEQPEIIEKTLNVYTDKEKNVKFDEQLEGINFHDIDRIYIVACGTAYYAGLQGQYFMKKLLGIDVFTDIASEFRYNDPVITNKTLAIFVSQSGETIDTLMSMKYAKEKGARTLAISNVLGSTITREADNVIYTLAGPEISVASTKAYSSQVLVMYLLSLYMGAKLGKIEEKDYQKYISDISLLKENVVKLISEKEKIHDIAKKIKDIKNGFYLGRGIDEKVAREGSLKMKEINYIHTEALPAGELKHGSIALIEKGVLVVAISTNLEMDEKVVSNIKEVKARGAYVVGACKEGSLVPEVVDDVIQVKDSGELLTPVLTVVGLQYLAYYTSLEKGYDVDKPRNLAKSVTVE</sequence>
<proteinExistence type="inferred from homology"/>
<evidence type="ECO:0000255" key="1">
    <source>
        <dbReference type="HAMAP-Rule" id="MF_00164"/>
    </source>
</evidence>
<accession>Q8RG65</accession>
<name>GLMS_FUSNN</name>
<dbReference type="EC" id="2.6.1.16" evidence="1"/>
<dbReference type="EMBL" id="AE009951">
    <property type="protein sequence ID" value="AAL94648.1"/>
    <property type="molecule type" value="Genomic_DNA"/>
</dbReference>
<dbReference type="RefSeq" id="NP_603349.1">
    <property type="nucleotide sequence ID" value="NC_003454.1"/>
</dbReference>
<dbReference type="RefSeq" id="WP_011016400.1">
    <property type="nucleotide sequence ID" value="NZ_CP028101.1"/>
</dbReference>
<dbReference type="SMR" id="Q8RG65"/>
<dbReference type="FunCoup" id="Q8RG65">
    <property type="interactions" value="239"/>
</dbReference>
<dbReference type="STRING" id="190304.FN0452"/>
<dbReference type="PaxDb" id="190304-FN0452"/>
<dbReference type="EnsemblBacteria" id="AAL94648">
    <property type="protein sequence ID" value="AAL94648"/>
    <property type="gene ID" value="FN0452"/>
</dbReference>
<dbReference type="GeneID" id="79783460"/>
<dbReference type="KEGG" id="fnu:FN0452"/>
<dbReference type="PATRIC" id="fig|190304.8.peg.1022"/>
<dbReference type="eggNOG" id="COG0449">
    <property type="taxonomic scope" value="Bacteria"/>
</dbReference>
<dbReference type="HOGENOM" id="CLU_012520_5_2_0"/>
<dbReference type="InParanoid" id="Q8RG65"/>
<dbReference type="BioCyc" id="FNUC190304:G1FZS-1045-MONOMER"/>
<dbReference type="Proteomes" id="UP000002521">
    <property type="component" value="Chromosome"/>
</dbReference>
<dbReference type="GO" id="GO:0005829">
    <property type="term" value="C:cytosol"/>
    <property type="evidence" value="ECO:0000318"/>
    <property type="project" value="GO_Central"/>
</dbReference>
<dbReference type="GO" id="GO:0097367">
    <property type="term" value="F:carbohydrate derivative binding"/>
    <property type="evidence" value="ECO:0007669"/>
    <property type="project" value="InterPro"/>
</dbReference>
<dbReference type="GO" id="GO:0004360">
    <property type="term" value="F:glutamine-fructose-6-phosphate transaminase (isomerizing) activity"/>
    <property type="evidence" value="ECO:0000318"/>
    <property type="project" value="GO_Central"/>
</dbReference>
<dbReference type="GO" id="GO:0005975">
    <property type="term" value="P:carbohydrate metabolic process"/>
    <property type="evidence" value="ECO:0007669"/>
    <property type="project" value="UniProtKB-UniRule"/>
</dbReference>
<dbReference type="GO" id="GO:0006002">
    <property type="term" value="P:fructose 6-phosphate metabolic process"/>
    <property type="evidence" value="ECO:0000318"/>
    <property type="project" value="GO_Central"/>
</dbReference>
<dbReference type="GO" id="GO:0006487">
    <property type="term" value="P:protein N-linked glycosylation"/>
    <property type="evidence" value="ECO:0000318"/>
    <property type="project" value="GO_Central"/>
</dbReference>
<dbReference type="GO" id="GO:0006047">
    <property type="term" value="P:UDP-N-acetylglucosamine metabolic process"/>
    <property type="evidence" value="ECO:0000318"/>
    <property type="project" value="GO_Central"/>
</dbReference>
<dbReference type="CDD" id="cd00714">
    <property type="entry name" value="GFAT"/>
    <property type="match status" value="1"/>
</dbReference>
<dbReference type="CDD" id="cd05008">
    <property type="entry name" value="SIS_GlmS_GlmD_1"/>
    <property type="match status" value="1"/>
</dbReference>
<dbReference type="CDD" id="cd05009">
    <property type="entry name" value="SIS_GlmS_GlmD_2"/>
    <property type="match status" value="1"/>
</dbReference>
<dbReference type="FunFam" id="3.40.50.10490:FF:000001">
    <property type="entry name" value="Glutamine--fructose-6-phosphate aminotransferase [isomerizing]"/>
    <property type="match status" value="1"/>
</dbReference>
<dbReference type="FunFam" id="3.60.20.10:FF:000006">
    <property type="entry name" value="Glutamine--fructose-6-phosphate aminotransferase [isomerizing]"/>
    <property type="match status" value="1"/>
</dbReference>
<dbReference type="Gene3D" id="3.40.50.10490">
    <property type="entry name" value="Glucose-6-phosphate isomerase like protein, domain 1"/>
    <property type="match status" value="2"/>
</dbReference>
<dbReference type="Gene3D" id="3.60.20.10">
    <property type="entry name" value="Glutamine Phosphoribosylpyrophosphate, subunit 1, domain 1"/>
    <property type="match status" value="1"/>
</dbReference>
<dbReference type="HAMAP" id="MF_00164">
    <property type="entry name" value="GlmS"/>
    <property type="match status" value="1"/>
</dbReference>
<dbReference type="InterPro" id="IPR017932">
    <property type="entry name" value="GATase_2_dom"/>
</dbReference>
<dbReference type="InterPro" id="IPR005855">
    <property type="entry name" value="GFAT"/>
</dbReference>
<dbReference type="InterPro" id="IPR047084">
    <property type="entry name" value="GFAT_N"/>
</dbReference>
<dbReference type="InterPro" id="IPR035466">
    <property type="entry name" value="GlmS/AgaS_SIS"/>
</dbReference>
<dbReference type="InterPro" id="IPR035490">
    <property type="entry name" value="GlmS/FrlB_SIS"/>
</dbReference>
<dbReference type="InterPro" id="IPR029055">
    <property type="entry name" value="Ntn_hydrolases_N"/>
</dbReference>
<dbReference type="InterPro" id="IPR001347">
    <property type="entry name" value="SIS_dom"/>
</dbReference>
<dbReference type="InterPro" id="IPR046348">
    <property type="entry name" value="SIS_dom_sf"/>
</dbReference>
<dbReference type="NCBIfam" id="TIGR01135">
    <property type="entry name" value="glmS"/>
    <property type="match status" value="1"/>
</dbReference>
<dbReference type="NCBIfam" id="NF001484">
    <property type="entry name" value="PRK00331.1"/>
    <property type="match status" value="1"/>
</dbReference>
<dbReference type="PANTHER" id="PTHR10937">
    <property type="entry name" value="GLUCOSAMINE--FRUCTOSE-6-PHOSPHATE AMINOTRANSFERASE, ISOMERIZING"/>
    <property type="match status" value="1"/>
</dbReference>
<dbReference type="PANTHER" id="PTHR10937:SF0">
    <property type="entry name" value="GLUTAMINE--FRUCTOSE-6-PHOSPHATE TRANSAMINASE (ISOMERIZING)"/>
    <property type="match status" value="1"/>
</dbReference>
<dbReference type="Pfam" id="PF13522">
    <property type="entry name" value="GATase_6"/>
    <property type="match status" value="1"/>
</dbReference>
<dbReference type="Pfam" id="PF01380">
    <property type="entry name" value="SIS"/>
    <property type="match status" value="2"/>
</dbReference>
<dbReference type="SUPFAM" id="SSF56235">
    <property type="entry name" value="N-terminal nucleophile aminohydrolases (Ntn hydrolases)"/>
    <property type="match status" value="1"/>
</dbReference>
<dbReference type="SUPFAM" id="SSF53697">
    <property type="entry name" value="SIS domain"/>
    <property type="match status" value="1"/>
</dbReference>
<dbReference type="PROSITE" id="PS51278">
    <property type="entry name" value="GATASE_TYPE_2"/>
    <property type="match status" value="1"/>
</dbReference>
<dbReference type="PROSITE" id="PS51464">
    <property type="entry name" value="SIS"/>
    <property type="match status" value="2"/>
</dbReference>
<feature type="initiator methionine" description="Removed" evidence="1">
    <location>
        <position position="1"/>
    </location>
</feature>
<feature type="chain" id="PRO_0000135333" description="Glutamine--fructose-6-phosphate aminotransferase [isomerizing]">
    <location>
        <begin position="2"/>
        <end position="607"/>
    </location>
</feature>
<feature type="domain" description="Glutamine amidotransferase type-2" evidence="1">
    <location>
        <begin position="2"/>
        <end position="218"/>
    </location>
</feature>
<feature type="domain" description="SIS 1" evidence="1">
    <location>
        <begin position="280"/>
        <end position="424"/>
    </location>
</feature>
<feature type="domain" description="SIS 2" evidence="1">
    <location>
        <begin position="457"/>
        <end position="597"/>
    </location>
</feature>
<feature type="active site" description="Nucleophile; for GATase activity" evidence="1">
    <location>
        <position position="2"/>
    </location>
</feature>
<feature type="active site" description="For Fru-6P isomerization activity" evidence="1">
    <location>
        <position position="602"/>
    </location>
</feature>
<protein>
    <recommendedName>
        <fullName evidence="1">Glutamine--fructose-6-phosphate aminotransferase [isomerizing]</fullName>
        <ecNumber evidence="1">2.6.1.16</ecNumber>
    </recommendedName>
    <alternativeName>
        <fullName evidence="1">D-fructose-6-phosphate amidotransferase</fullName>
    </alternativeName>
    <alternativeName>
        <fullName evidence="1">GFAT</fullName>
    </alternativeName>
    <alternativeName>
        <fullName evidence="1">Glucosamine-6-phosphate synthase</fullName>
    </alternativeName>
    <alternativeName>
        <fullName evidence="1">Hexosephosphate aminotransferase</fullName>
    </alternativeName>
    <alternativeName>
        <fullName evidence="1">L-glutamine--D-fructose-6-phosphate amidotransferase</fullName>
    </alternativeName>
</protein>
<comment type="function">
    <text evidence="1">Catalyzes the first step in hexosamine metabolism, converting fructose-6P into glucosamine-6P using glutamine as a nitrogen source.</text>
</comment>
<comment type="catalytic activity">
    <reaction evidence="1">
        <text>D-fructose 6-phosphate + L-glutamine = D-glucosamine 6-phosphate + L-glutamate</text>
        <dbReference type="Rhea" id="RHEA:13237"/>
        <dbReference type="ChEBI" id="CHEBI:29985"/>
        <dbReference type="ChEBI" id="CHEBI:58359"/>
        <dbReference type="ChEBI" id="CHEBI:58725"/>
        <dbReference type="ChEBI" id="CHEBI:61527"/>
        <dbReference type="EC" id="2.6.1.16"/>
    </reaction>
</comment>
<comment type="subunit">
    <text evidence="1">Homodimer.</text>
</comment>
<comment type="subcellular location">
    <subcellularLocation>
        <location evidence="1">Cytoplasm</location>
    </subcellularLocation>
</comment>
<reference key="1">
    <citation type="journal article" date="2002" name="J. Bacteriol.">
        <title>Genome sequence and analysis of the oral bacterium Fusobacterium nucleatum strain ATCC 25586.</title>
        <authorList>
            <person name="Kapatral V."/>
            <person name="Anderson I."/>
            <person name="Ivanova N."/>
            <person name="Reznik G."/>
            <person name="Los T."/>
            <person name="Lykidis A."/>
            <person name="Bhattacharyya A."/>
            <person name="Bartman A."/>
            <person name="Gardner W."/>
            <person name="Grechkin G."/>
            <person name="Zhu L."/>
            <person name="Vasieva O."/>
            <person name="Chu L."/>
            <person name="Kogan Y."/>
            <person name="Chaga O."/>
            <person name="Goltsman E."/>
            <person name="Bernal A."/>
            <person name="Larsen N."/>
            <person name="D'Souza M."/>
            <person name="Walunas T."/>
            <person name="Pusch G."/>
            <person name="Haselkorn R."/>
            <person name="Fonstein M."/>
            <person name="Kyrpides N.C."/>
            <person name="Overbeek R."/>
        </authorList>
    </citation>
    <scope>NUCLEOTIDE SEQUENCE [LARGE SCALE GENOMIC DNA]</scope>
    <source>
        <strain>ATCC 25586 / DSM 15643 / BCRC 10681 / CIP 101130 / JCM 8532 / KCTC 2640 / LMG 13131 / VPI 4355</strain>
    </source>
</reference>
<gene>
    <name evidence="1" type="primary">glmS</name>
    <name type="ordered locus">FN0452</name>
</gene>
<organism>
    <name type="scientific">Fusobacterium nucleatum subsp. nucleatum (strain ATCC 25586 / DSM 15643 / BCRC 10681 / CIP 101130 / JCM 8532 / KCTC 2640 / LMG 13131 / VPI 4355)</name>
    <dbReference type="NCBI Taxonomy" id="190304"/>
    <lineage>
        <taxon>Bacteria</taxon>
        <taxon>Fusobacteriati</taxon>
        <taxon>Fusobacteriota</taxon>
        <taxon>Fusobacteriia</taxon>
        <taxon>Fusobacteriales</taxon>
        <taxon>Fusobacteriaceae</taxon>
        <taxon>Fusobacterium</taxon>
    </lineage>
</organism>